<dbReference type="EMBL" id="M87280">
    <property type="protein sequence ID" value="AAA64975.1"/>
    <property type="molecule type" value="Genomic_DNA"/>
</dbReference>
<dbReference type="PIR" id="S52977">
    <property type="entry name" value="S52977"/>
</dbReference>
<dbReference type="SMR" id="Q01334"/>
<dbReference type="GO" id="GO:0005886">
    <property type="term" value="C:plasma membrane"/>
    <property type="evidence" value="ECO:0007669"/>
    <property type="project" value="TreeGrafter"/>
</dbReference>
<dbReference type="GO" id="GO:0015293">
    <property type="term" value="F:symporter activity"/>
    <property type="evidence" value="ECO:0007669"/>
    <property type="project" value="InterPro"/>
</dbReference>
<dbReference type="GO" id="GO:0008643">
    <property type="term" value="P:carbohydrate transport"/>
    <property type="evidence" value="ECO:0007669"/>
    <property type="project" value="InterPro"/>
</dbReference>
<dbReference type="Gene3D" id="1.20.1250.20">
    <property type="entry name" value="MFS general substrate transporter like domains"/>
    <property type="match status" value="1"/>
</dbReference>
<dbReference type="InterPro" id="IPR039672">
    <property type="entry name" value="MFS_2"/>
</dbReference>
<dbReference type="InterPro" id="IPR036259">
    <property type="entry name" value="MFS_trans_sf"/>
</dbReference>
<dbReference type="PANTHER" id="PTHR11328:SF24">
    <property type="entry name" value="MAJOR FACILITATOR SUPERFAMILY (MFS) PROFILE DOMAIN-CONTAINING PROTEIN"/>
    <property type="match status" value="1"/>
</dbReference>
<dbReference type="PANTHER" id="PTHR11328">
    <property type="entry name" value="MAJOR FACILITATOR SUPERFAMILY DOMAIN-CONTAINING PROTEIN"/>
    <property type="match status" value="1"/>
</dbReference>
<dbReference type="Pfam" id="PF13347">
    <property type="entry name" value="MFS_2"/>
    <property type="match status" value="1"/>
</dbReference>
<dbReference type="SUPFAM" id="SSF103473">
    <property type="entry name" value="MFS general substrate transporter"/>
    <property type="match status" value="1"/>
</dbReference>
<sequence>MLTMNNLLMVLVQALRQHRWLCLFGVAYIFSSVGNGLTQTLILGQLLRWHAPPSTLTLTYMLATLPGFIGSYLGAMMYFVTYYLGSASYFMWMLAAHILGKAAGSLLAKRLTRNFNKVQIFGYCAVLAGVLSIALFFAPKSVFVLVPLTFIISTLYQATTTLMWVMMADVADYGEWSQGKRMDGIIFSTFLAVLKLGMALSGAIVGWTLGFSGYVANAPEQTSLAMHCIVALFTVVPGLLSLAAFATLRWYKLDDQTMQEINLAKMQTIVKG</sequence>
<proteinExistence type="inferred from homology"/>
<accession>Q01334</accession>
<reference key="1">
    <citation type="journal article" date="1994" name="Mol. Gen. Genet.">
        <title>Functional assignment of Erwinia herbicola Eho10 carotenoid genes expressed in Escherichia coli.</title>
        <authorList>
            <person name="Hundle B."/>
            <person name="Alberti M."/>
            <person name="Nievelstein V."/>
            <person name="Beyer P."/>
            <person name="Kleinig H."/>
            <person name="Armstrong G.A."/>
            <person name="Burke D.H."/>
            <person name="Hearst J.E."/>
        </authorList>
    </citation>
    <scope>NUCLEOTIDE SEQUENCE [GENOMIC DNA]</scope>
    <source>
        <strain>ATCC 39368 / Eho10</strain>
    </source>
</reference>
<evidence type="ECO:0000305" key="1"/>
<protein>
    <recommendedName>
        <fullName>Uncharacterized 29.9 kDa protein in crtE 3'region</fullName>
    </recommendedName>
    <alternativeName>
        <fullName>ORF3</fullName>
    </alternativeName>
</protein>
<name>YCR3_PSEVU</name>
<feature type="chain" id="PRO_0000170774" description="Uncharacterized 29.9 kDa protein in crtE 3'region">
    <location>
        <begin position="1"/>
        <end position="272"/>
    </location>
</feature>
<comment type="similarity">
    <text evidence="1">Belongs to the sodium:galactoside symporter (TC 2.A.2) family.</text>
</comment>
<organism>
    <name type="scientific">Pseudescherichia vulneris</name>
    <name type="common">Escherichia vulneris</name>
    <dbReference type="NCBI Taxonomy" id="566"/>
    <lineage>
        <taxon>Bacteria</taxon>
        <taxon>Pseudomonadati</taxon>
        <taxon>Pseudomonadota</taxon>
        <taxon>Gammaproteobacteria</taxon>
        <taxon>Enterobacterales</taxon>
        <taxon>Enterobacteriaceae</taxon>
        <taxon>Pseudescherichia</taxon>
    </lineage>
</organism>